<feature type="signal peptide" evidence="2">
    <location>
        <begin position="1"/>
        <end position="17"/>
    </location>
</feature>
<feature type="propeptide" id="PRO_0000407445" evidence="1">
    <location>
        <begin position="18"/>
        <end position="122"/>
    </location>
</feature>
<feature type="chain" id="PRO_0000407446" description="Carboxypeptidase Y homolog A">
    <location>
        <begin position="123"/>
        <end position="539"/>
    </location>
</feature>
<feature type="active site" evidence="3">
    <location>
        <position position="263"/>
    </location>
</feature>
<feature type="active site" evidence="3">
    <location>
        <position position="455"/>
    </location>
</feature>
<feature type="active site" evidence="3">
    <location>
        <position position="517"/>
    </location>
</feature>
<feature type="glycosylation site" description="N-linked (GlcNAc...) asparagine" evidence="2">
    <location>
        <position position="207"/>
    </location>
</feature>
<feature type="glycosylation site" description="N-linked (GlcNAc...) asparagine" evidence="2">
    <location>
        <position position="506"/>
    </location>
</feature>
<feature type="disulfide bond" evidence="1">
    <location>
        <begin position="176"/>
        <end position="416"/>
    </location>
</feature>
<feature type="disulfide bond" evidence="1">
    <location>
        <begin position="310"/>
        <end position="324"/>
    </location>
</feature>
<feature type="disulfide bond" evidence="1">
    <location>
        <begin position="334"/>
        <end position="357"/>
    </location>
</feature>
<feature type="disulfide bond" evidence="1">
    <location>
        <begin position="341"/>
        <end position="350"/>
    </location>
</feature>
<feature type="disulfide bond" evidence="1">
    <location>
        <begin position="379"/>
        <end position="386"/>
    </location>
</feature>
<keyword id="KW-0121">Carboxypeptidase</keyword>
<keyword id="KW-1015">Disulfide bond</keyword>
<keyword id="KW-0325">Glycoprotein</keyword>
<keyword id="KW-0378">Hydrolase</keyword>
<keyword id="KW-0645">Protease</keyword>
<keyword id="KW-0732">Signal</keyword>
<keyword id="KW-0926">Vacuole</keyword>
<keyword id="KW-0865">Zymogen</keyword>
<organism>
    <name type="scientific">Coccidioides posadasii (strain C735)</name>
    <name type="common">Valley fever fungus</name>
    <dbReference type="NCBI Taxonomy" id="222929"/>
    <lineage>
        <taxon>Eukaryota</taxon>
        <taxon>Fungi</taxon>
        <taxon>Dikarya</taxon>
        <taxon>Ascomycota</taxon>
        <taxon>Pezizomycotina</taxon>
        <taxon>Eurotiomycetes</taxon>
        <taxon>Eurotiomycetidae</taxon>
        <taxon>Onygenales</taxon>
        <taxon>Onygenaceae</taxon>
        <taxon>Coccidioides</taxon>
    </lineage>
</organism>
<reference key="1">
    <citation type="journal article" date="2006" name="Infect. Immun.">
        <title>A recombinant aspartyl protease of Coccidioides posadasii induces protection against pulmonary coccidioidomycosis in mice.</title>
        <authorList>
            <person name="Tarcha E.J."/>
            <person name="Basrur V."/>
            <person name="Hung C.Y."/>
            <person name="Gardner M.J."/>
            <person name="Cole G.T."/>
        </authorList>
    </citation>
    <scope>NUCLEOTIDE SEQUENCE [GENOMIC DNA]</scope>
    <source>
        <strain>C735</strain>
    </source>
</reference>
<reference key="2">
    <citation type="journal article" date="2009" name="Genome Res.">
        <title>Comparative genomic analyses of the human fungal pathogens Coccidioides and their relatives.</title>
        <authorList>
            <person name="Sharpton T.J."/>
            <person name="Stajich J.E."/>
            <person name="Rounsley S.D."/>
            <person name="Gardner M.J."/>
            <person name="Wortman J.R."/>
            <person name="Jordar V.S."/>
            <person name="Maiti R."/>
            <person name="Kodira C.D."/>
            <person name="Neafsey D.E."/>
            <person name="Zeng Q."/>
            <person name="Hung C.-Y."/>
            <person name="McMahan C."/>
            <person name="Muszewska A."/>
            <person name="Grynberg M."/>
            <person name="Mandel M.A."/>
            <person name="Kellner E.M."/>
            <person name="Barker B.M."/>
            <person name="Galgiani J.N."/>
            <person name="Orbach M.J."/>
            <person name="Kirkland T.N."/>
            <person name="Cole G.T."/>
            <person name="Henn M.R."/>
            <person name="Birren B.W."/>
            <person name="Taylor J.W."/>
        </authorList>
    </citation>
    <scope>NUCLEOTIDE SEQUENCE [LARGE SCALE GENOMIC DNA]</scope>
    <source>
        <strain>C735</strain>
    </source>
</reference>
<comment type="function">
    <text evidence="1">Vacuolar carboxypeptidase involved in degradation of small peptides. Digests preferentially peptides containing an aliphatic or hydrophobic residue in P1' position, as well as methionine, leucine or phenylalanine in P1 position of ester substrate (By similarity).</text>
</comment>
<comment type="catalytic activity">
    <reaction evidence="3">
        <text>Release of a C-terminal amino acid with broad specificity.</text>
        <dbReference type="EC" id="3.4.16.5"/>
    </reaction>
</comment>
<comment type="subcellular location">
    <subcellularLocation>
        <location evidence="1">Vacuole</location>
    </subcellularLocation>
</comment>
<comment type="similarity">
    <text evidence="4">Belongs to the peptidase S10 family.</text>
</comment>
<proteinExistence type="inferred from homology"/>
<accession>C5P212</accession>
<accession>Q3HYC0</accession>
<dbReference type="EC" id="3.4.16.5"/>
<dbReference type="EMBL" id="DQ176864">
    <property type="protein sequence ID" value="ABA54912.1"/>
    <property type="molecule type" value="Genomic_DNA"/>
</dbReference>
<dbReference type="EMBL" id="ACFW01000012">
    <property type="protein sequence ID" value="EER28915.1"/>
    <property type="molecule type" value="Genomic_DNA"/>
</dbReference>
<dbReference type="RefSeq" id="XP_003071060.1">
    <property type="nucleotide sequence ID" value="XM_003071014.1"/>
</dbReference>
<dbReference type="SMR" id="C5P212"/>
<dbReference type="ESTHER" id="cocpo-q3hyc0">
    <property type="family name" value="Carboxypeptidase_S10"/>
</dbReference>
<dbReference type="MEROPS" id="S10.001"/>
<dbReference type="GlyCosmos" id="C5P212">
    <property type="glycosylation" value="2 sites, No reported glycans"/>
</dbReference>
<dbReference type="KEGG" id="cpw:9696555"/>
<dbReference type="VEuPathDB" id="FungiDB:CPC735_036210"/>
<dbReference type="HOGENOM" id="CLU_008523_10_4_1"/>
<dbReference type="OrthoDB" id="443318at2759"/>
<dbReference type="Proteomes" id="UP000009084">
    <property type="component" value="Unassembled WGS sequence"/>
</dbReference>
<dbReference type="GO" id="GO:0000324">
    <property type="term" value="C:fungal-type vacuole"/>
    <property type="evidence" value="ECO:0007669"/>
    <property type="project" value="TreeGrafter"/>
</dbReference>
<dbReference type="GO" id="GO:0004185">
    <property type="term" value="F:serine-type carboxypeptidase activity"/>
    <property type="evidence" value="ECO:0007669"/>
    <property type="project" value="UniProtKB-EC"/>
</dbReference>
<dbReference type="GO" id="GO:0006508">
    <property type="term" value="P:proteolysis"/>
    <property type="evidence" value="ECO:0007669"/>
    <property type="project" value="UniProtKB-KW"/>
</dbReference>
<dbReference type="FunFam" id="1.10.287.410:FF:000001">
    <property type="entry name" value="Carboxypeptidase Y"/>
    <property type="match status" value="1"/>
</dbReference>
<dbReference type="Gene3D" id="1.10.287.410">
    <property type="match status" value="1"/>
</dbReference>
<dbReference type="Gene3D" id="3.40.50.1820">
    <property type="entry name" value="alpha/beta hydrolase"/>
    <property type="match status" value="1"/>
</dbReference>
<dbReference type="InterPro" id="IPR029058">
    <property type="entry name" value="AB_hydrolase_fold"/>
</dbReference>
<dbReference type="InterPro" id="IPR001563">
    <property type="entry name" value="Peptidase_S10"/>
</dbReference>
<dbReference type="InterPro" id="IPR008442">
    <property type="entry name" value="Propeptide_carboxypepY"/>
</dbReference>
<dbReference type="InterPro" id="IPR018202">
    <property type="entry name" value="Ser_caboxypep_ser_AS"/>
</dbReference>
<dbReference type="PANTHER" id="PTHR11802:SF113">
    <property type="entry name" value="SERINE CARBOXYPEPTIDASE CTSA-4.1"/>
    <property type="match status" value="1"/>
</dbReference>
<dbReference type="PANTHER" id="PTHR11802">
    <property type="entry name" value="SERINE PROTEASE FAMILY S10 SERINE CARBOXYPEPTIDASE"/>
    <property type="match status" value="1"/>
</dbReference>
<dbReference type="Pfam" id="PF05388">
    <property type="entry name" value="Carbpep_Y_N"/>
    <property type="match status" value="1"/>
</dbReference>
<dbReference type="Pfam" id="PF00450">
    <property type="entry name" value="Peptidase_S10"/>
    <property type="match status" value="1"/>
</dbReference>
<dbReference type="PRINTS" id="PR00724">
    <property type="entry name" value="CRBOXYPTASEC"/>
</dbReference>
<dbReference type="SUPFAM" id="SSF53474">
    <property type="entry name" value="alpha/beta-Hydrolases"/>
    <property type="match status" value="1"/>
</dbReference>
<dbReference type="PROSITE" id="PS00131">
    <property type="entry name" value="CARBOXYPEPT_SER_SER"/>
    <property type="match status" value="1"/>
</dbReference>
<name>CBPYA_COCP7</name>
<sequence length="539" mass="60311">MKALTATLLVGTALAAVPPQQPIQVPTEDSAWAKPLENLKDTFKTLGNDAKQAWNELASAFPDAINEYTLFSAPKKHTRRPDTHWDHIVRGSDVQSIWVEGADGQKRREVDGKLEKYDLRVKAVDPSKLGIDKVKQYSGYLDDKENDKHLFYWFFESRNDPKNDPVVLWLNGGPGCSSLTGLFLELGPASIDKNLKVVHNPYSWNSNASVIFLDQPVNVGFSYSGGSVSDTIAAGKDVYALLTLFFKQFPQYATQDFHIAGESYAGHYIPVFASEILSHKNRNINLQSVLIGNGLTDPLTQYPHYRPMACGEGGYPAVLDESTCRSMDNSLPRCLSMIESCYSSESAWLCVPASIYCNNAMIGPYQRTGQNPYDVRAKCEDGGSLCYSQLGYITEWLNQKSVMDALGVEVSSYDSCNMDINRNFLFHGDWMKPFHRVVPGLIDQIRVLIYAGDADFICNWLGNQAWTDALEWSGREKFAKAELKDLTIVDNENKGKNIGKVKSYGNFTFMRLFGGGHMVPLDQPEASLEFFNRWLGGEW</sequence>
<gene>
    <name type="primary">cpyA</name>
    <name type="ORF">CPC735_036210</name>
</gene>
<evidence type="ECO:0000250" key="1"/>
<evidence type="ECO:0000255" key="2"/>
<evidence type="ECO:0000255" key="3">
    <source>
        <dbReference type="PROSITE-ProRule" id="PRU10074"/>
    </source>
</evidence>
<evidence type="ECO:0000305" key="4"/>
<protein>
    <recommendedName>
        <fullName>Carboxypeptidase Y homolog A</fullName>
        <ecNumber>3.4.16.5</ecNumber>
    </recommendedName>
</protein>